<reference key="1">
    <citation type="journal article" date="2002" name="Genetics">
        <title>Two O-linked N-acetylglucosamine transferase genes of Arabidopsis thaliana L. Heynh. have overlapping functions necessary for gamete and seed development.</title>
        <authorList>
            <person name="Hartweck L.M."/>
            <person name="Scott C.L."/>
            <person name="Olszewski N.E."/>
        </authorList>
    </citation>
    <scope>NUCLEOTIDE SEQUENCE [MRNA]</scope>
    <scope>CATALYTIC ACTIVITY</scope>
</reference>
<reference key="2">
    <citation type="journal article" date="2000" name="Nature">
        <title>Sequence and analysis of chromosome 3 of the plant Arabidopsis thaliana.</title>
        <authorList>
            <person name="Salanoubat M."/>
            <person name="Lemcke K."/>
            <person name="Rieger M."/>
            <person name="Ansorge W."/>
            <person name="Unseld M."/>
            <person name="Fartmann B."/>
            <person name="Valle G."/>
            <person name="Bloecker H."/>
            <person name="Perez-Alonso M."/>
            <person name="Obermaier B."/>
            <person name="Delseny M."/>
            <person name="Boutry M."/>
            <person name="Grivell L.A."/>
            <person name="Mache R."/>
            <person name="Puigdomenech P."/>
            <person name="De Simone V."/>
            <person name="Choisne N."/>
            <person name="Artiguenave F."/>
            <person name="Robert C."/>
            <person name="Brottier P."/>
            <person name="Wincker P."/>
            <person name="Cattolico L."/>
            <person name="Weissenbach J."/>
            <person name="Saurin W."/>
            <person name="Quetier F."/>
            <person name="Schaefer M."/>
            <person name="Mueller-Auer S."/>
            <person name="Gabel C."/>
            <person name="Fuchs M."/>
            <person name="Benes V."/>
            <person name="Wurmbach E."/>
            <person name="Drzonek H."/>
            <person name="Erfle H."/>
            <person name="Jordan N."/>
            <person name="Bangert S."/>
            <person name="Wiedelmann R."/>
            <person name="Kranz H."/>
            <person name="Voss H."/>
            <person name="Holland R."/>
            <person name="Brandt P."/>
            <person name="Nyakatura G."/>
            <person name="Vezzi A."/>
            <person name="D'Angelo M."/>
            <person name="Pallavicini A."/>
            <person name="Toppo S."/>
            <person name="Simionati B."/>
            <person name="Conrad A."/>
            <person name="Hornischer K."/>
            <person name="Kauer G."/>
            <person name="Loehnert T.-H."/>
            <person name="Nordsiek G."/>
            <person name="Reichelt J."/>
            <person name="Scharfe M."/>
            <person name="Schoen O."/>
            <person name="Bargues M."/>
            <person name="Terol J."/>
            <person name="Climent J."/>
            <person name="Navarro P."/>
            <person name="Collado C."/>
            <person name="Perez-Perez A."/>
            <person name="Ottenwaelder B."/>
            <person name="Duchemin D."/>
            <person name="Cooke R."/>
            <person name="Laudie M."/>
            <person name="Berger-Llauro C."/>
            <person name="Purnelle B."/>
            <person name="Masuy D."/>
            <person name="de Haan M."/>
            <person name="Maarse A.C."/>
            <person name="Alcaraz J.-P."/>
            <person name="Cottet A."/>
            <person name="Casacuberta E."/>
            <person name="Monfort A."/>
            <person name="Argiriou A."/>
            <person name="Flores M."/>
            <person name="Liguori R."/>
            <person name="Vitale D."/>
            <person name="Mannhaupt G."/>
            <person name="Haase D."/>
            <person name="Schoof H."/>
            <person name="Rudd S."/>
            <person name="Zaccaria P."/>
            <person name="Mewes H.-W."/>
            <person name="Mayer K.F.X."/>
            <person name="Kaul S."/>
            <person name="Town C.D."/>
            <person name="Koo H.L."/>
            <person name="Tallon L.J."/>
            <person name="Jenkins J."/>
            <person name="Rooney T."/>
            <person name="Rizzo M."/>
            <person name="Walts A."/>
            <person name="Utterback T."/>
            <person name="Fujii C.Y."/>
            <person name="Shea T.P."/>
            <person name="Creasy T.H."/>
            <person name="Haas B."/>
            <person name="Maiti R."/>
            <person name="Wu D."/>
            <person name="Peterson J."/>
            <person name="Van Aken S."/>
            <person name="Pai G."/>
            <person name="Militscher J."/>
            <person name="Sellers P."/>
            <person name="Gill J.E."/>
            <person name="Feldblyum T.V."/>
            <person name="Preuss D."/>
            <person name="Lin X."/>
            <person name="Nierman W.C."/>
            <person name="Salzberg S.L."/>
            <person name="White O."/>
            <person name="Venter J.C."/>
            <person name="Fraser C.M."/>
            <person name="Kaneko T."/>
            <person name="Nakamura Y."/>
            <person name="Sato S."/>
            <person name="Kato T."/>
            <person name="Asamizu E."/>
            <person name="Sasamoto S."/>
            <person name="Kimura T."/>
            <person name="Idesawa K."/>
            <person name="Kawashima K."/>
            <person name="Kishida Y."/>
            <person name="Kiyokawa C."/>
            <person name="Kohara M."/>
            <person name="Matsumoto M."/>
            <person name="Matsuno A."/>
            <person name="Muraki A."/>
            <person name="Nakayama S."/>
            <person name="Nakazaki N."/>
            <person name="Shinpo S."/>
            <person name="Takeuchi C."/>
            <person name="Wada T."/>
            <person name="Watanabe A."/>
            <person name="Yamada M."/>
            <person name="Yasuda M."/>
            <person name="Tabata S."/>
        </authorList>
    </citation>
    <scope>NUCLEOTIDE SEQUENCE [LARGE SCALE GENOMIC DNA]</scope>
    <source>
        <strain>cv. Columbia</strain>
    </source>
</reference>
<reference key="3">
    <citation type="journal article" date="2017" name="Plant J.">
        <title>Araport11: a complete reannotation of the Arabidopsis thaliana reference genome.</title>
        <authorList>
            <person name="Cheng C.Y."/>
            <person name="Krishnakumar V."/>
            <person name="Chan A.P."/>
            <person name="Thibaud-Nissen F."/>
            <person name="Schobel S."/>
            <person name="Town C.D."/>
        </authorList>
    </citation>
    <scope>GENOME REANNOTATION</scope>
    <source>
        <strain>cv. Columbia</strain>
    </source>
</reference>
<reference key="4">
    <citation type="journal article" date="2003" name="Science">
        <title>Empirical analysis of transcriptional activity in the Arabidopsis genome.</title>
        <authorList>
            <person name="Yamada K."/>
            <person name="Lim J."/>
            <person name="Dale J.M."/>
            <person name="Chen H."/>
            <person name="Shinn P."/>
            <person name="Palm C.J."/>
            <person name="Southwick A.M."/>
            <person name="Wu H.C."/>
            <person name="Kim C.J."/>
            <person name="Nguyen M."/>
            <person name="Pham P.K."/>
            <person name="Cheuk R.F."/>
            <person name="Karlin-Newmann G."/>
            <person name="Liu S.X."/>
            <person name="Lam B."/>
            <person name="Sakano H."/>
            <person name="Wu T."/>
            <person name="Yu G."/>
            <person name="Miranda M."/>
            <person name="Quach H.L."/>
            <person name="Tripp M."/>
            <person name="Chang C.H."/>
            <person name="Lee J.M."/>
            <person name="Toriumi M.J."/>
            <person name="Chan M.M."/>
            <person name="Tang C.C."/>
            <person name="Onodera C.S."/>
            <person name="Deng J.M."/>
            <person name="Akiyama K."/>
            <person name="Ansari Y."/>
            <person name="Arakawa T."/>
            <person name="Banh J."/>
            <person name="Banno F."/>
            <person name="Bowser L."/>
            <person name="Brooks S.Y."/>
            <person name="Carninci P."/>
            <person name="Chao Q."/>
            <person name="Choy N."/>
            <person name="Enju A."/>
            <person name="Goldsmith A.D."/>
            <person name="Gurjal M."/>
            <person name="Hansen N.F."/>
            <person name="Hayashizaki Y."/>
            <person name="Johnson-Hopson C."/>
            <person name="Hsuan V.W."/>
            <person name="Iida K."/>
            <person name="Karnes M."/>
            <person name="Khan S."/>
            <person name="Koesema E."/>
            <person name="Ishida J."/>
            <person name="Jiang P.X."/>
            <person name="Jones T."/>
            <person name="Kawai J."/>
            <person name="Kamiya A."/>
            <person name="Meyers C."/>
            <person name="Nakajima M."/>
            <person name="Narusaka M."/>
            <person name="Seki M."/>
            <person name="Sakurai T."/>
            <person name="Satou M."/>
            <person name="Tamse R."/>
            <person name="Vaysberg M."/>
            <person name="Wallender E.K."/>
            <person name="Wong C."/>
            <person name="Yamamura Y."/>
            <person name="Yuan S."/>
            <person name="Shinozaki K."/>
            <person name="Davis R.W."/>
            <person name="Theologis A."/>
            <person name="Ecker J.R."/>
        </authorList>
    </citation>
    <scope>NUCLEOTIDE SEQUENCE [LARGE SCALE MRNA]</scope>
    <source>
        <strain>cv. Columbia</strain>
    </source>
</reference>
<reference key="5">
    <citation type="journal article" date="2005" name="J. Virol.">
        <title>Identification of secret agent as the O-GlcNAc transferase that participates in Plum pox virus infection.</title>
        <authorList>
            <person name="Chen D."/>
            <person name="Juarez S."/>
            <person name="Hartweck L."/>
            <person name="Alamillo J.M."/>
            <person name="Simon-Mateo C."/>
            <person name="Perez J.J."/>
            <person name="Fernandez-Fernandez M.R."/>
            <person name="Olszewski N.E."/>
            <person name="Garcia J.A."/>
        </authorList>
    </citation>
    <scope>FUNCTION</scope>
</reference>
<reference key="6">
    <citation type="journal article" date="2012" name="Plant Cell">
        <title>The Arabidopsis O-linked N-acetylglucosamine transferase SPINDLY interacts with class I TCPs to facilitate cytokinin responses in leaves and flowers.</title>
        <authorList>
            <person name="Steiner E."/>
            <person name="Efroni I."/>
            <person name="Gopalraj M."/>
            <person name="Saathoff K."/>
            <person name="Tseng T.S."/>
            <person name="Kieffer M."/>
            <person name="Eshed Y."/>
            <person name="Olszewski N."/>
            <person name="Weiss D."/>
        </authorList>
    </citation>
    <scope>INTERACTION WITH TCP14 AND TCP15</scope>
</reference>
<reference key="7">
    <citation type="journal article" date="2016" name="Genes Dev.">
        <title>O-GlcNAcylation of master growth repressor DELLA by SECRET AGENT modulates multiple signaling pathways in Arabidopsis.</title>
        <authorList>
            <person name="Zentella R."/>
            <person name="Hu J."/>
            <person name="Hsieh W.P."/>
            <person name="Matsumoto P.A."/>
            <person name="Dawdy A."/>
            <person name="Barnhill B."/>
            <person name="Oldenhof H."/>
            <person name="Hartweck L.M."/>
            <person name="Maitra S."/>
            <person name="Thomas S.G."/>
            <person name="Cockrell S."/>
            <person name="Boyce M."/>
            <person name="Shabanowitz J."/>
            <person name="Hunt D.F."/>
            <person name="Olszewski N.E."/>
            <person name="Sun T.P."/>
        </authorList>
    </citation>
    <scope>FUNCTION</scope>
</reference>
<reference key="8">
    <citation type="journal article" date="2018" name="EMBO J.">
        <title>Arabidopsis O-GlcNAc transferase SEC activates histone methyltransferase ATX1 to regulate flowering.</title>
        <authorList>
            <person name="Xing L."/>
            <person name="Liu Y."/>
            <person name="Xu S."/>
            <person name="Xiao J."/>
            <person name="Wang B."/>
            <person name="Deng H."/>
            <person name="Lu Z."/>
            <person name="Xu Y."/>
            <person name="Chong K."/>
        </authorList>
    </citation>
    <scope>FUNCTION</scope>
    <scope>DISRUPTION PHENOTYPE</scope>
    <scope>INTERACTION WITH ATX1</scope>
    <scope>MUTAGENESIS OF PHE-540; HIS-541; HIS-604; GLN-776 AND LYS-779</scope>
    <source>
        <strain>cv. Columbia</strain>
        <strain>cv. Wassilewskija</strain>
    </source>
</reference>
<sequence>MISSKNGAAMISRPVFLSDRVDEVFSRKLDLSVSSSSSSSLLQQFNKTHEGDDDARLALAHQLYKGGDFKQALEHSNMVYQRNPLRTDNLLLIGAIYYQLQEYDMCIARNEEALRIQPQFAECYGNMANAWKEKGDTDRAIRYYLIAIELRPNFADAWSNLASAYMRKGRLSEATQCCQQALSLNPLLVDAHSNLGNLMKAQGLIHEAYSCYLEAVRIQPTFAIAWSNLAGLFMESGDLNRALQYYKEAVKLKPAFPDAYLNLGNVYKALGRPTEAIMCYQHALQMRPNSAMAFGNIASIYYEQGQLDLAIRHYKQALSRDPRFLEAYNNLGNALKDIGRVDEAVRCYNQCLALQPNHPQAMANLGNIYMEWNMMGPASSLFKATLAVTTGLSAPFNNLAIIYKQQGNYSDAISCYNEVLRIDPLAADALVNRGNTYKEIGRVTEAIQDYMHAINFRPTMAEAHANLASAYKDSGHVEAAITSYKQALLLRPDFPEATCNLLHTLQCVCCWEDRSKMFAEVESIIRRQINMSVLPSVQPFHAIAYPIDPILALEISRKYAAHCSIIASRFGLPPFTHPAGLPVKREGGFKRLRIGYVSSDFGNHPLSHLMGSVFGMHNRENVEVFCYALSANDNTEWRQRIQSEAEHFLDVSAMSSDAIAKIINQDKIQILINLNGYTKGARNEIFAMQPAPIQVSYMGFPGTTGATYIDYLVTDEFVSPLQYAHIYSEKLVHLPHCYFVNDYKQKNQDVLDPNSKPKRSDYGLPEDKFIFACFNQLYKMDPEIVNTWCNILKRVPNSALWLLRFPAAGEMRFRTYAAAQGVQPDQIIFTDVAMKSEHIRRSVLADVILDTPLCNGHTTGTDVLWAGVPMITLPLEKMATRVAGSLCLATGLGHGMIVNSLEEYEEKAVSLALNKPKLQALTKELRASRLTCPLFDTMRWVKNLERSYFKMWNLHCSGQQPQHFKVLENDLEFPHDR</sequence>
<accession>Q9M8Y0</accession>
<gene>
    <name evidence="8" type="primary">SEC</name>
    <name evidence="10" type="ordered locus">At3g04240</name>
    <name evidence="11" type="ORF">T6K12.14</name>
</gene>
<organism>
    <name type="scientific">Arabidopsis thaliana</name>
    <name type="common">Mouse-ear cress</name>
    <dbReference type="NCBI Taxonomy" id="3702"/>
    <lineage>
        <taxon>Eukaryota</taxon>
        <taxon>Viridiplantae</taxon>
        <taxon>Streptophyta</taxon>
        <taxon>Embryophyta</taxon>
        <taxon>Tracheophyta</taxon>
        <taxon>Spermatophyta</taxon>
        <taxon>Magnoliopsida</taxon>
        <taxon>eudicotyledons</taxon>
        <taxon>Gunneridae</taxon>
        <taxon>Pentapetalae</taxon>
        <taxon>rosids</taxon>
        <taxon>malvids</taxon>
        <taxon>Brassicales</taxon>
        <taxon>Brassicaceae</taxon>
        <taxon>Camelineae</taxon>
        <taxon>Arabidopsis</taxon>
    </lineage>
</organism>
<feature type="chain" id="PRO_0000191782" description="Probable UDP-N-acetylglucosamine--peptide N-acetylglucosaminyltransferase SEC">
    <location>
        <begin position="1"/>
        <end position="977"/>
    </location>
</feature>
<feature type="repeat" description="TPR 1" evidence="1">
    <location>
        <begin position="2"/>
        <end position="35"/>
    </location>
</feature>
<feature type="repeat" description="TPR 2" evidence="2">
    <location>
        <begin position="53"/>
        <end position="86"/>
    </location>
</feature>
<feature type="repeat" description="TPR 3" evidence="2">
    <location>
        <begin position="87"/>
        <end position="120"/>
    </location>
</feature>
<feature type="repeat" description="TPR 4" evidence="2">
    <location>
        <begin position="121"/>
        <end position="154"/>
    </location>
</feature>
<feature type="repeat" description="TPR 5" evidence="2">
    <location>
        <begin position="155"/>
        <end position="188"/>
    </location>
</feature>
<feature type="repeat" description="TPR 6" evidence="2">
    <location>
        <begin position="189"/>
        <end position="222"/>
    </location>
</feature>
<feature type="repeat" description="TPR 7" evidence="2">
    <location>
        <begin position="223"/>
        <end position="256"/>
    </location>
</feature>
<feature type="repeat" description="TPR 8" evidence="2">
    <location>
        <begin position="257"/>
        <end position="290"/>
    </location>
</feature>
<feature type="repeat" description="TPR 9" evidence="2">
    <location>
        <begin position="291"/>
        <end position="324"/>
    </location>
</feature>
<feature type="repeat" description="TPR 10" evidence="2">
    <location>
        <begin position="325"/>
        <end position="358"/>
    </location>
</feature>
<feature type="repeat" description="TPR 11" evidence="2">
    <location>
        <begin position="359"/>
        <end position="392"/>
    </location>
</feature>
<feature type="repeat" description="TPR 12" evidence="2">
    <location>
        <begin position="393"/>
        <end position="426"/>
    </location>
</feature>
<feature type="repeat" description="TPR 13" evidence="2">
    <location>
        <begin position="427"/>
        <end position="460"/>
    </location>
</feature>
<feature type="repeat" description="TPR 14" evidence="2">
    <location>
        <begin position="461"/>
        <end position="494"/>
    </location>
</feature>
<feature type="region of interest" description="Catalytic region" evidence="9">
    <location>
        <begin position="495"/>
        <end position="977"/>
    </location>
</feature>
<feature type="mutagenesis site" description="Reduced activity; when associated with A-541, A-604, A-776 and A-779." evidence="7">
    <original>F</original>
    <variation>A</variation>
    <location>
        <position position="540"/>
    </location>
</feature>
<feature type="mutagenesis site" description="Reduced activity; when associated with A-540, A-604, A-776 and A-779." evidence="7">
    <original>H</original>
    <variation>A</variation>
    <location>
        <position position="541"/>
    </location>
</feature>
<feature type="mutagenesis site" description="Reduced activity; when associated with A-540, A-541, A-776 and A-779." evidence="7">
    <original>H</original>
    <variation>A</variation>
    <location>
        <position position="604"/>
    </location>
</feature>
<feature type="mutagenesis site" description="Reduced activity; when associated with A-540, A-541, A-604 and A-779." evidence="7">
    <original>Q</original>
    <variation>A</variation>
    <location>
        <position position="776"/>
    </location>
</feature>
<feature type="mutagenesis site" description="Reduced activity; when associated with A-540, A-541, A-604 and A-776." evidence="7">
    <original>K</original>
    <variation>A</variation>
    <location>
        <position position="779"/>
    </location>
</feature>
<keyword id="KW-0217">Developmental protein</keyword>
<keyword id="KW-0328">Glycosyltransferase</keyword>
<keyword id="KW-1185">Reference proteome</keyword>
<keyword id="KW-0677">Repeat</keyword>
<keyword id="KW-0802">TPR repeat</keyword>
<keyword id="KW-0808">Transferase</keyword>
<name>SEC_ARATH</name>
<comment type="function">
    <text evidence="3 4 6 7">O-linked N-acetylglucosamine transferase (OGT) that mediates O-glycosylation of capsid protein (CP) of virus in case of infection by Plum pox virus (PubMed:16014901). OGTs catalyze the addition of nucleotide-activated sugars directly onto the polypeptide through O-glycosidic linkage with the hydroxyl of serine or threonine (PubMed:16014901). Probably acts by adding O-linked sugars to yet unknown proteins. Its OGT activity has been proved in vitro but not in vivo (PubMed:12136030). Required with SPY for gamete and seed development (PubMed:16014901). Mediates O-glycosylation of the DELLA protein RGA, a repressor of the gibberellin (GA) signaling pathway (PubMed:26773002). O-glycosylation by SEC inhibits RGA binding to four of its interactors PIF3, PIF4, JAZ1, and BZR1 that are key regulators in light, jasmonate, and brassinosteroid signaling pathways, respectively (PubMed:26773002). Activates ATX1 through O-GlcNAc modification to augment ATX1-mediated H3K4me3 histone epigenetic modification at FLC locus, thus preventing premature flowering (PubMed:30150325).</text>
</comment>
<comment type="catalytic activity">
    <reaction evidence="3">
        <text>L-seryl-[protein] + UDP-N-acetyl-alpha-D-glucosamine = 3-O-(N-acetyl-beta-D-glucosaminyl)-L-seryl-[protein] + UDP + H(+)</text>
        <dbReference type="Rhea" id="RHEA:48904"/>
        <dbReference type="Rhea" id="RHEA-COMP:9863"/>
        <dbReference type="Rhea" id="RHEA-COMP:12251"/>
        <dbReference type="ChEBI" id="CHEBI:15378"/>
        <dbReference type="ChEBI" id="CHEBI:29999"/>
        <dbReference type="ChEBI" id="CHEBI:57705"/>
        <dbReference type="ChEBI" id="CHEBI:58223"/>
        <dbReference type="ChEBI" id="CHEBI:90838"/>
        <dbReference type="EC" id="2.4.1.255"/>
    </reaction>
</comment>
<comment type="catalytic activity">
    <reaction evidence="3">
        <text>L-threonyl-[protein] + UDP-N-acetyl-alpha-D-glucosamine = 3-O-(N-acetyl-beta-D-glucosaminyl)-L-threonyl-[protein] + UDP + H(+)</text>
        <dbReference type="Rhea" id="RHEA:48908"/>
        <dbReference type="Rhea" id="RHEA-COMP:11060"/>
        <dbReference type="Rhea" id="RHEA-COMP:12252"/>
        <dbReference type="ChEBI" id="CHEBI:15378"/>
        <dbReference type="ChEBI" id="CHEBI:30013"/>
        <dbReference type="ChEBI" id="CHEBI:57705"/>
        <dbReference type="ChEBI" id="CHEBI:58223"/>
        <dbReference type="ChEBI" id="CHEBI:90840"/>
        <dbReference type="EC" id="2.4.1.255"/>
    </reaction>
</comment>
<comment type="pathway">
    <text>Protein modification; protein glycosylation.</text>
</comment>
<comment type="subunit">
    <text evidence="5 7">Interacts with TCP14 and TCP15 (PubMed:22267487). Interacts with ATX1 (PubMed:30150325).</text>
</comment>
<comment type="interaction">
    <interactant intactId="EBI-4426966">
        <id>Q9M8Y0</id>
    </interactant>
    <interactant intactId="EBI-4466599">
        <id>Q9SCU7</id>
        <label>MYB30</label>
    </interactant>
    <organismsDiffer>false</organismsDiffer>
    <experiments>3</experiments>
</comment>
<comment type="interaction">
    <interactant intactId="EBI-4426966">
        <id>Q9M8Y0</id>
    </interactant>
    <interactant intactId="EBI-15192297">
        <id>Q9LQF0</id>
        <label>TCP23</label>
    </interactant>
    <organismsDiffer>false</organismsDiffer>
    <experiments>3</experiments>
</comment>
<comment type="interaction">
    <interactant intactId="EBI-4426966">
        <id>Q9M8Y0</id>
    </interactant>
    <interactant intactId="EBI-4426557">
        <id>Q84MB2</id>
        <label>TIFY8</label>
    </interactant>
    <organismsDiffer>false</organismsDiffer>
    <experiments>3</experiments>
</comment>
<comment type="interaction">
    <interactant intactId="EBI-4426966">
        <id>Q9M8Y0</id>
    </interactant>
    <interactant intactId="EBI-4424568">
        <id>Q9LVG2</id>
        <label>TOE2</label>
    </interactant>
    <organismsDiffer>false</organismsDiffer>
    <experiments>4</experiments>
</comment>
<comment type="disruption phenotype">
    <text evidence="7">Early flowering phenotype due to reduced histone H3 'Lys-4' trimethylation (H3K4me3) of FLC thus leading to lower FLC expression.</text>
</comment>
<comment type="similarity">
    <text evidence="9">Belongs to the glycosyltransferase 41 family. O-GlcNAc transferase subfamily.</text>
</comment>
<evidence type="ECO:0000255" key="1"/>
<evidence type="ECO:0000255" key="2">
    <source>
        <dbReference type="PROSITE-ProRule" id="PRU00339"/>
    </source>
</evidence>
<evidence type="ECO:0000269" key="3">
    <source>
    </source>
</evidence>
<evidence type="ECO:0000269" key="4">
    <source>
    </source>
</evidence>
<evidence type="ECO:0000269" key="5">
    <source>
    </source>
</evidence>
<evidence type="ECO:0000269" key="6">
    <source>
    </source>
</evidence>
<evidence type="ECO:0000269" key="7">
    <source>
    </source>
</evidence>
<evidence type="ECO:0000303" key="8">
    <source>
    </source>
</evidence>
<evidence type="ECO:0000305" key="9"/>
<evidence type="ECO:0000312" key="10">
    <source>
        <dbReference type="Araport" id="AT3G04240"/>
    </source>
</evidence>
<evidence type="ECO:0000312" key="11">
    <source>
        <dbReference type="EMBL" id="AAF26789.1"/>
    </source>
</evidence>
<dbReference type="EC" id="2.4.1.255" evidence="3"/>
<dbReference type="EMBL" id="AF441079">
    <property type="protein sequence ID" value="AAL60196.1"/>
    <property type="molecule type" value="mRNA"/>
</dbReference>
<dbReference type="EMBL" id="AC016829">
    <property type="protein sequence ID" value="AAF26789.1"/>
    <property type="molecule type" value="Genomic_DNA"/>
</dbReference>
<dbReference type="EMBL" id="CP002686">
    <property type="protein sequence ID" value="AEE74056.1"/>
    <property type="molecule type" value="Genomic_DNA"/>
</dbReference>
<dbReference type="EMBL" id="AY090938">
    <property type="protein sequence ID" value="AAM13988.1"/>
    <property type="molecule type" value="mRNA"/>
</dbReference>
<dbReference type="EMBL" id="AY117340">
    <property type="protein sequence ID" value="AAM51415.1"/>
    <property type="molecule type" value="mRNA"/>
</dbReference>
<dbReference type="RefSeq" id="NP_187074.1">
    <property type="nucleotide sequence ID" value="NM_111295.4"/>
</dbReference>
<dbReference type="EMDB" id="EMD-27700"/>
<dbReference type="EMDB" id="EMD-27701"/>
<dbReference type="SMR" id="Q9M8Y0"/>
<dbReference type="BioGRID" id="4914">
    <property type="interactions" value="8"/>
</dbReference>
<dbReference type="FunCoup" id="Q9M8Y0">
    <property type="interactions" value="3061"/>
</dbReference>
<dbReference type="IntAct" id="Q9M8Y0">
    <property type="interactions" value="6"/>
</dbReference>
<dbReference type="STRING" id="3702.Q9M8Y0"/>
<dbReference type="CAZy" id="GT41">
    <property type="family name" value="Glycosyltransferase Family 41"/>
</dbReference>
<dbReference type="GlyGen" id="Q9M8Y0">
    <property type="glycosylation" value="1 site, 1 O-linked glycan (1 site)"/>
</dbReference>
<dbReference type="PaxDb" id="3702-AT3G04240.1"/>
<dbReference type="ProteomicsDB" id="232927"/>
<dbReference type="EnsemblPlants" id="AT3G04240.1">
    <property type="protein sequence ID" value="AT3G04240.1"/>
    <property type="gene ID" value="AT3G04240"/>
</dbReference>
<dbReference type="GeneID" id="819579"/>
<dbReference type="Gramene" id="AT3G04240.1">
    <property type="protein sequence ID" value="AT3G04240.1"/>
    <property type="gene ID" value="AT3G04240"/>
</dbReference>
<dbReference type="KEGG" id="ath:AT3G04240"/>
<dbReference type="Araport" id="AT3G04240"/>
<dbReference type="TAIR" id="AT3G04240">
    <property type="gene designation" value="SEC"/>
</dbReference>
<dbReference type="eggNOG" id="KOG4626">
    <property type="taxonomic scope" value="Eukaryota"/>
</dbReference>
<dbReference type="HOGENOM" id="CLU_001721_1_1_1"/>
<dbReference type="InParanoid" id="Q9M8Y0"/>
<dbReference type="OrthoDB" id="421121at2759"/>
<dbReference type="PhylomeDB" id="Q9M8Y0"/>
<dbReference type="BRENDA" id="2.4.1.255">
    <property type="organism ID" value="399"/>
</dbReference>
<dbReference type="UniPathway" id="UPA00378"/>
<dbReference type="PRO" id="PR:Q9M8Y0"/>
<dbReference type="Proteomes" id="UP000006548">
    <property type="component" value="Chromosome 3"/>
</dbReference>
<dbReference type="ExpressionAtlas" id="Q9M8Y0">
    <property type="expression patterns" value="baseline and differential"/>
</dbReference>
<dbReference type="GO" id="GO:0016757">
    <property type="term" value="F:glycosyltransferase activity"/>
    <property type="evidence" value="ECO:0000314"/>
    <property type="project" value="TAIR"/>
</dbReference>
<dbReference type="GO" id="GO:0097363">
    <property type="term" value="F:protein O-acetylglucosaminyltransferase activity"/>
    <property type="evidence" value="ECO:0007669"/>
    <property type="project" value="UniProtKB-EC"/>
</dbReference>
<dbReference type="GO" id="GO:0009910">
    <property type="term" value="P:negative regulation of flower development"/>
    <property type="evidence" value="ECO:0000315"/>
    <property type="project" value="UniProtKB"/>
</dbReference>
<dbReference type="GO" id="GO:0006493">
    <property type="term" value="P:protein O-linked glycosylation"/>
    <property type="evidence" value="ECO:0000314"/>
    <property type="project" value="TAIR"/>
</dbReference>
<dbReference type="GO" id="GO:0010228">
    <property type="term" value="P:vegetative to reproductive phase transition of meristem"/>
    <property type="evidence" value="ECO:0000315"/>
    <property type="project" value="UniProtKB"/>
</dbReference>
<dbReference type="FunFam" id="1.25.40.10:FF:000303">
    <property type="entry name" value="Probable UDP-N-acetylglucosamine--peptide N-acetylglucosaminyltransferase SEC"/>
    <property type="match status" value="1"/>
</dbReference>
<dbReference type="FunFam" id="1.25.40.10:FF:000131">
    <property type="entry name" value="probable UDP-N-acetylglucosamine--peptide N-acetylglucosaminyltransferase SEC"/>
    <property type="match status" value="1"/>
</dbReference>
<dbReference type="FunFam" id="1.25.40.10:FF:000181">
    <property type="entry name" value="probable UDP-N-acetylglucosamine--peptide N-acetylglucosaminyltransferase SEC"/>
    <property type="match status" value="1"/>
</dbReference>
<dbReference type="FunFam" id="3.40.50.11380:FF:000002">
    <property type="entry name" value="probable UDP-N-acetylglucosamine--peptide N-acetylglucosaminyltransferase SEC"/>
    <property type="match status" value="1"/>
</dbReference>
<dbReference type="FunFam" id="3.40.50.11380:FF:000003">
    <property type="entry name" value="probable UDP-N-acetylglucosamine--peptide N-acetylglucosaminyltransferase SEC"/>
    <property type="match status" value="1"/>
</dbReference>
<dbReference type="FunFam" id="3.40.50.2000:FF:000070">
    <property type="entry name" value="probable UDP-N-acetylglucosamine--peptide N-acetylglucosaminyltransferase SEC"/>
    <property type="match status" value="1"/>
</dbReference>
<dbReference type="Gene3D" id="3.40.50.11380">
    <property type="match status" value="1"/>
</dbReference>
<dbReference type="Gene3D" id="3.40.50.2000">
    <property type="entry name" value="Glycogen Phosphorylase B"/>
    <property type="match status" value="1"/>
</dbReference>
<dbReference type="Gene3D" id="1.25.40.10">
    <property type="entry name" value="Tetratricopeptide repeat domain"/>
    <property type="match status" value="3"/>
</dbReference>
<dbReference type="InterPro" id="IPR037919">
    <property type="entry name" value="OGT"/>
</dbReference>
<dbReference type="InterPro" id="IPR029489">
    <property type="entry name" value="OGT/SEC/SPY_C"/>
</dbReference>
<dbReference type="InterPro" id="IPR011990">
    <property type="entry name" value="TPR-like_helical_dom_sf"/>
</dbReference>
<dbReference type="InterPro" id="IPR019734">
    <property type="entry name" value="TPR_rpt"/>
</dbReference>
<dbReference type="PANTHER" id="PTHR44366">
    <property type="entry name" value="UDP-N-ACETYLGLUCOSAMINE--PEPTIDE N-ACETYLGLUCOSAMINYLTRANSFERASE 110 KDA SUBUNIT"/>
    <property type="match status" value="1"/>
</dbReference>
<dbReference type="PANTHER" id="PTHR44366:SF1">
    <property type="entry name" value="UDP-N-ACETYLGLUCOSAMINE--PEPTIDE N-ACETYLGLUCOSAMINYLTRANSFERASE 110 KDA SUBUNIT"/>
    <property type="match status" value="1"/>
</dbReference>
<dbReference type="Pfam" id="PF13844">
    <property type="entry name" value="Glyco_transf_41"/>
    <property type="match status" value="2"/>
</dbReference>
<dbReference type="Pfam" id="PF00515">
    <property type="entry name" value="TPR_1"/>
    <property type="match status" value="2"/>
</dbReference>
<dbReference type="Pfam" id="PF13414">
    <property type="entry name" value="TPR_11"/>
    <property type="match status" value="1"/>
</dbReference>
<dbReference type="Pfam" id="PF13424">
    <property type="entry name" value="TPR_12"/>
    <property type="match status" value="1"/>
</dbReference>
<dbReference type="Pfam" id="PF13181">
    <property type="entry name" value="TPR_8"/>
    <property type="match status" value="3"/>
</dbReference>
<dbReference type="SMART" id="SM00028">
    <property type="entry name" value="TPR"/>
    <property type="match status" value="13"/>
</dbReference>
<dbReference type="SUPFAM" id="SSF48452">
    <property type="entry name" value="TPR-like"/>
    <property type="match status" value="2"/>
</dbReference>
<dbReference type="PROSITE" id="PS50005">
    <property type="entry name" value="TPR"/>
    <property type="match status" value="13"/>
</dbReference>
<dbReference type="PROSITE" id="PS50293">
    <property type="entry name" value="TPR_REGION"/>
    <property type="match status" value="1"/>
</dbReference>
<protein>
    <recommendedName>
        <fullName evidence="8">Probable UDP-N-acetylglucosamine--peptide N-acetylglucosaminyltransferase SEC</fullName>
        <ecNumber evidence="3">2.4.1.255</ecNumber>
    </recommendedName>
    <alternativeName>
        <fullName evidence="8">Protein SECRET AGENT</fullName>
    </alternativeName>
</protein>
<proteinExistence type="evidence at protein level"/>